<sequence>MPLTARAGHTLHRLPLSHYWWLLLGRHSLRHVHSYLRLRKGLRLPLPWPEQECLHLHPKPYKFLLRYPCLTRQPHLLQGWPADSSLWFDPKPYHPSADSKLLPLGLITLSAFSMRVSEPTHCSGFHAADPSLSWLTGSSPWLVLLQAPGGSLFCHDVFQGRLYLLSHSVSLFLKTGLRQCEAIYRAPLWRVRPLPSLWTCRDPDTAFLPKLLARTARRGLAAFYALWRLHLGSRSELSHPVLEWERTELVLTDRRRGWPCTHLLSGSESQRVSSSDAGDTWNAATEKAAGGKEEAERGGRQQATDRLASPHLTRGRRDCGRSLQGEEPSAAEDFARCRPLLDELCGEGGWLPFAFLTASPHVCLILTEGGPVLALDLNDTSLWRIADDLELLLRLGSLLLLSGLRLPLRPPSGSGEAARKPGYEKEEGRGRATTASATAATSPRRPTRPRGVTEKGRVTTGDVPFSAHPESEEQTDGHHGRQESGHGDQRGGDGRGHRDDGARRHANDETEPQQRGEHEDGEQTDSGREEDAQESEVARRDEKGTEQGGSGRSCGRATQTYGGRGEHGAWSSIPLSVPRPDPRVWVPPPHLLFPSPLPSITPVEDEPSARPRCPPGPAEEPSKCSPCPPCPSPDAPQSAVPRLSALSVPSPSTARVRFSLSSLSSSSSSSSSSSPSYSPSPLSPPSPVSPSSPRSPFISPIRSPGLRAKPWVSSGHPVAFPPAPSSAPPFSKRVPSVPSSASPSAPCIGRSRPPSAQTA</sequence>
<feature type="chain" id="PRO_0000408403" description="Uncharacterized protein DR1">
    <location>
        <begin position="1"/>
        <end position="759"/>
    </location>
</feature>
<feature type="region of interest" description="Disordered" evidence="1">
    <location>
        <begin position="269"/>
        <end position="328"/>
    </location>
</feature>
<feature type="region of interest" description="Disordered" evidence="1">
    <location>
        <begin position="406"/>
        <end position="759"/>
    </location>
</feature>
<feature type="compositionally biased region" description="Basic and acidic residues" evidence="1">
    <location>
        <begin position="289"/>
        <end position="299"/>
    </location>
</feature>
<feature type="compositionally biased region" description="Low complexity" evidence="1">
    <location>
        <begin position="406"/>
        <end position="415"/>
    </location>
</feature>
<feature type="compositionally biased region" description="Basic and acidic residues" evidence="1">
    <location>
        <begin position="417"/>
        <end position="430"/>
    </location>
</feature>
<feature type="compositionally biased region" description="Low complexity" evidence="1">
    <location>
        <begin position="431"/>
        <end position="444"/>
    </location>
</feature>
<feature type="compositionally biased region" description="Basic and acidic residues" evidence="1">
    <location>
        <begin position="469"/>
        <end position="518"/>
    </location>
</feature>
<feature type="compositionally biased region" description="Basic and acidic residues" evidence="1">
    <location>
        <begin position="525"/>
        <end position="545"/>
    </location>
</feature>
<feature type="compositionally biased region" description="Pro residues" evidence="1">
    <location>
        <begin position="585"/>
        <end position="599"/>
    </location>
</feature>
<feature type="compositionally biased region" description="Low complexity" evidence="1">
    <location>
        <begin position="659"/>
        <end position="680"/>
    </location>
</feature>
<feature type="compositionally biased region" description="Pro residues" evidence="1">
    <location>
        <begin position="681"/>
        <end position="690"/>
    </location>
</feature>
<feature type="compositionally biased region" description="Low complexity" evidence="1">
    <location>
        <begin position="691"/>
        <end position="704"/>
    </location>
</feature>
<feature type="compositionally biased region" description="Low complexity" evidence="1">
    <location>
        <begin position="728"/>
        <end position="746"/>
    </location>
</feature>
<gene>
    <name type="primary">DR1</name>
</gene>
<dbReference type="EMBL" id="AF157706">
    <property type="protein sequence ID" value="AAD49614.1"/>
    <property type="molecule type" value="Genomic_DNA"/>
</dbReference>
<dbReference type="EMBL" id="AF157706">
    <property type="protein sequence ID" value="AAD49682.1"/>
    <property type="molecule type" value="Genomic_DNA"/>
</dbReference>
<dbReference type="RefSeq" id="NP_050176.1">
    <property type="nucleotide sequence ID" value="NC_000898.1"/>
</dbReference>
<dbReference type="RefSeq" id="NP_050273.1">
    <property type="nucleotide sequence ID" value="NC_000898.1"/>
</dbReference>
<dbReference type="DNASU" id="1497094"/>
<dbReference type="GeneID" id="1497018"/>
<dbReference type="GeneID" id="1497094"/>
<dbReference type="KEGG" id="vg:1497018"/>
<dbReference type="KEGG" id="vg:1497094"/>
<dbReference type="Proteomes" id="UP000006930">
    <property type="component" value="Segment"/>
</dbReference>
<reference key="1">
    <citation type="journal article" date="1999" name="J. Virol.">
        <title>Human herpesvirus 6B genome sequence: coding content and comparison with human herpesvirus 6A.</title>
        <authorList>
            <person name="Dominguez G."/>
            <person name="Dambaugh T.R."/>
            <person name="Stamey F.R."/>
            <person name="Dewhurst S."/>
            <person name="Inoue N."/>
            <person name="Pellett P.E."/>
        </authorList>
    </citation>
    <scope>NUCLEOTIDE SEQUENCE [LARGE SCALE GENOMIC DNA]</scope>
</reference>
<organism>
    <name type="scientific">Human herpesvirus 6B (strain Z29)</name>
    <name type="common">HHV-6 variant B</name>
    <name type="synonym">Human B lymphotropic virus</name>
    <dbReference type="NCBI Taxonomy" id="36351"/>
    <lineage>
        <taxon>Viruses</taxon>
        <taxon>Duplodnaviria</taxon>
        <taxon>Heunggongvirae</taxon>
        <taxon>Peploviricota</taxon>
        <taxon>Herviviricetes</taxon>
        <taxon>Herpesvirales</taxon>
        <taxon>Orthoherpesviridae</taxon>
        <taxon>Betaherpesvirinae</taxon>
        <taxon>Roseolovirus</taxon>
        <taxon>Roseolovirus humanbeta6b</taxon>
        <taxon>Human herpesvirus 6B</taxon>
    </lineage>
</organism>
<name>DR1_HHV6Z</name>
<accession>Q9PWX1</accession>
<proteinExistence type="predicted"/>
<organismHost>
    <name type="scientific">Homo sapiens</name>
    <name type="common">Human</name>
    <dbReference type="NCBI Taxonomy" id="9606"/>
</organismHost>
<evidence type="ECO:0000256" key="1">
    <source>
        <dbReference type="SAM" id="MobiDB-lite"/>
    </source>
</evidence>
<keyword id="KW-1185">Reference proteome</keyword>
<protein>
    <recommendedName>
        <fullName>Uncharacterized protein DR1</fullName>
    </recommendedName>
</protein>